<accession>Q87H78</accession>
<reference key="1">
    <citation type="journal article" date="2003" name="Lancet">
        <title>Genome sequence of Vibrio parahaemolyticus: a pathogenic mechanism distinct from that of V. cholerae.</title>
        <authorList>
            <person name="Makino K."/>
            <person name="Oshima K."/>
            <person name="Kurokawa K."/>
            <person name="Yokoyama K."/>
            <person name="Uda T."/>
            <person name="Tagomori K."/>
            <person name="Iijima Y."/>
            <person name="Najima M."/>
            <person name="Nakano M."/>
            <person name="Yamashita A."/>
            <person name="Kubota Y."/>
            <person name="Kimura S."/>
            <person name="Yasunaga T."/>
            <person name="Honda T."/>
            <person name="Shinagawa H."/>
            <person name="Hattori M."/>
            <person name="Iida T."/>
        </authorList>
    </citation>
    <scope>NUCLEOTIDE SEQUENCE [LARGE SCALE GENOMIC DNA]</scope>
    <source>
        <strain>RIMD 2210633</strain>
    </source>
</reference>
<comment type="function">
    <text evidence="1">Catalyzes the interconversion of beta-pyran and beta-furan forms of D-ribose.</text>
</comment>
<comment type="catalytic activity">
    <reaction evidence="1">
        <text>beta-D-ribopyranose = beta-D-ribofuranose</text>
        <dbReference type="Rhea" id="RHEA:25432"/>
        <dbReference type="ChEBI" id="CHEBI:27476"/>
        <dbReference type="ChEBI" id="CHEBI:47002"/>
        <dbReference type="EC" id="5.4.99.62"/>
    </reaction>
</comment>
<comment type="pathway">
    <text evidence="1">Carbohydrate metabolism; D-ribose degradation; D-ribose 5-phosphate from beta-D-ribopyranose: step 1/2.</text>
</comment>
<comment type="subunit">
    <text evidence="1">Homodecamer.</text>
</comment>
<comment type="subcellular location">
    <subcellularLocation>
        <location evidence="1">Cytoplasm</location>
    </subcellularLocation>
</comment>
<comment type="similarity">
    <text evidence="1">Belongs to the RbsD / FucU family. RbsD subfamily.</text>
</comment>
<keyword id="KW-0119">Carbohydrate metabolism</keyword>
<keyword id="KW-0963">Cytoplasm</keyword>
<keyword id="KW-0413">Isomerase</keyword>
<feature type="chain" id="PRO_0000346297" description="D-ribose pyranase">
    <location>
        <begin position="1"/>
        <end position="139"/>
    </location>
</feature>
<feature type="active site" description="Proton donor" evidence="1">
    <location>
        <position position="20"/>
    </location>
</feature>
<feature type="binding site" evidence="1">
    <location>
        <position position="28"/>
    </location>
    <ligand>
        <name>substrate</name>
    </ligand>
</feature>
<feature type="binding site" evidence="1">
    <location>
        <position position="106"/>
    </location>
    <ligand>
        <name>substrate</name>
    </ligand>
</feature>
<feature type="binding site" evidence="1">
    <location>
        <begin position="128"/>
        <end position="130"/>
    </location>
    <ligand>
        <name>substrate</name>
    </ligand>
</feature>
<dbReference type="EC" id="5.4.99.62" evidence="1"/>
<dbReference type="EMBL" id="BA000032">
    <property type="protein sequence ID" value="BAC62430.1"/>
    <property type="molecule type" value="Genomic_DNA"/>
</dbReference>
<dbReference type="RefSeq" id="NP_800597.1">
    <property type="nucleotide sequence ID" value="NC_004605.1"/>
</dbReference>
<dbReference type="RefSeq" id="WP_005463700.1">
    <property type="nucleotide sequence ID" value="NC_004605.1"/>
</dbReference>
<dbReference type="SMR" id="Q87H78"/>
<dbReference type="GeneID" id="1191782"/>
<dbReference type="KEGG" id="vpa:VPA1087"/>
<dbReference type="PATRIC" id="fig|223926.6.peg.4015"/>
<dbReference type="eggNOG" id="COG1869">
    <property type="taxonomic scope" value="Bacteria"/>
</dbReference>
<dbReference type="HOGENOM" id="CLU_135498_0_0_6"/>
<dbReference type="UniPathway" id="UPA00916">
    <property type="reaction ID" value="UER00888"/>
</dbReference>
<dbReference type="Proteomes" id="UP000002493">
    <property type="component" value="Chromosome 2"/>
</dbReference>
<dbReference type="GO" id="GO:0005829">
    <property type="term" value="C:cytosol"/>
    <property type="evidence" value="ECO:0007669"/>
    <property type="project" value="TreeGrafter"/>
</dbReference>
<dbReference type="GO" id="GO:0062193">
    <property type="term" value="F:D-ribose pyranase activity"/>
    <property type="evidence" value="ECO:0007669"/>
    <property type="project" value="UniProtKB-EC"/>
</dbReference>
<dbReference type="GO" id="GO:0016872">
    <property type="term" value="F:intramolecular lyase activity"/>
    <property type="evidence" value="ECO:0007669"/>
    <property type="project" value="UniProtKB-UniRule"/>
</dbReference>
<dbReference type="GO" id="GO:0048029">
    <property type="term" value="F:monosaccharide binding"/>
    <property type="evidence" value="ECO:0007669"/>
    <property type="project" value="InterPro"/>
</dbReference>
<dbReference type="GO" id="GO:0019303">
    <property type="term" value="P:D-ribose catabolic process"/>
    <property type="evidence" value="ECO:0007669"/>
    <property type="project" value="UniProtKB-UniRule"/>
</dbReference>
<dbReference type="Gene3D" id="3.40.1650.10">
    <property type="entry name" value="RbsD-like domain"/>
    <property type="match status" value="1"/>
</dbReference>
<dbReference type="HAMAP" id="MF_01661">
    <property type="entry name" value="D_rib_pyranase"/>
    <property type="match status" value="1"/>
</dbReference>
<dbReference type="InterPro" id="IPR023064">
    <property type="entry name" value="D-ribose_pyranase"/>
</dbReference>
<dbReference type="InterPro" id="IPR023750">
    <property type="entry name" value="RbsD-like_sf"/>
</dbReference>
<dbReference type="InterPro" id="IPR007721">
    <property type="entry name" value="RbsD_FucU"/>
</dbReference>
<dbReference type="NCBIfam" id="NF008761">
    <property type="entry name" value="PRK11797.1"/>
    <property type="match status" value="1"/>
</dbReference>
<dbReference type="PANTHER" id="PTHR37831">
    <property type="entry name" value="D-RIBOSE PYRANASE"/>
    <property type="match status" value="1"/>
</dbReference>
<dbReference type="PANTHER" id="PTHR37831:SF1">
    <property type="entry name" value="D-RIBOSE PYRANASE"/>
    <property type="match status" value="1"/>
</dbReference>
<dbReference type="Pfam" id="PF05025">
    <property type="entry name" value="RbsD_FucU"/>
    <property type="match status" value="1"/>
</dbReference>
<dbReference type="SUPFAM" id="SSF102546">
    <property type="entry name" value="RbsD-like"/>
    <property type="match status" value="1"/>
</dbReference>
<name>RBSD_VIBPA</name>
<organism>
    <name type="scientific">Vibrio parahaemolyticus serotype O3:K6 (strain RIMD 2210633)</name>
    <dbReference type="NCBI Taxonomy" id="223926"/>
    <lineage>
        <taxon>Bacteria</taxon>
        <taxon>Pseudomonadati</taxon>
        <taxon>Pseudomonadota</taxon>
        <taxon>Gammaproteobacteria</taxon>
        <taxon>Vibrionales</taxon>
        <taxon>Vibrionaceae</taxon>
        <taxon>Vibrio</taxon>
    </lineage>
</organism>
<evidence type="ECO:0000255" key="1">
    <source>
        <dbReference type="HAMAP-Rule" id="MF_01661"/>
    </source>
</evidence>
<gene>
    <name evidence="1" type="primary">rbsD</name>
    <name type="ordered locus">VPA1087</name>
</gene>
<protein>
    <recommendedName>
        <fullName evidence="1">D-ribose pyranase</fullName>
        <ecNumber evidence="1">5.4.99.62</ecNumber>
    </recommendedName>
</protein>
<sequence>MKKSTLINSGISYLVATLGHTDEITICDAGLPIPDHVQRIDLALTHGVPSFLDTVRVILSESQIEGVIIAEEFSDVSPVLHEALLKELSKESEETGKSIEIKYVSHEAFKARTEQSRAVVRTGECTPYANVIFQAGVVF</sequence>
<proteinExistence type="inferred from homology"/>